<feature type="chain" id="PRO_0000065772" description="Vitelline coat lysin">
    <location>
        <begin position="1"/>
        <end position="118"/>
    </location>
</feature>
<accession>P07447</accession>
<sequence>YGPGVRVVVHQNQRLGYRNNGIVKTAVMRVFDGRANSYVNKHPAGQPYLRMPIWTPGVRVHQNTDLGYRKNAFREYMRWMGKSCALNVRERYTLNPDQRRFLNIPGARMPIRTPGAFR</sequence>
<proteinExistence type="evidence at protein level"/>
<name>VCLY_TEGPF</name>
<reference key="1">
    <citation type="journal article" date="1986" name="Eur. J. Biochem.">
        <title>The complete amino acid sequence of vitelline coat lysin.</title>
        <authorList>
            <person name="Haino-Fukushima K."/>
            <person name="Kasai H."/>
            <person name="Isobe T."/>
            <person name="Kimura M."/>
            <person name="Okuyama T."/>
        </authorList>
    </citation>
    <scope>PROTEIN SEQUENCE</scope>
</reference>
<protein>
    <recommendedName>
        <fullName>Vitelline coat lysin</fullName>
    </recommendedName>
</protein>
<dbReference type="PIR" id="A25403">
    <property type="entry name" value="A25403"/>
</dbReference>
<dbReference type="InterPro" id="IPR035916">
    <property type="entry name" value="Egg_lysin_sf"/>
</dbReference>
<dbReference type="SUPFAM" id="SSF47082">
    <property type="entry name" value="Fertilization protein"/>
    <property type="match status" value="1"/>
</dbReference>
<organism>
    <name type="scientific">Tegula pfeifferi</name>
    <name type="common">Pfeiffer's top shell</name>
    <dbReference type="NCBI Taxonomy" id="81901"/>
    <lineage>
        <taxon>Eukaryota</taxon>
        <taxon>Metazoa</taxon>
        <taxon>Spiralia</taxon>
        <taxon>Lophotrochozoa</taxon>
        <taxon>Mollusca</taxon>
        <taxon>Gastropoda</taxon>
        <taxon>Vetigastropoda</taxon>
        <taxon>Trochida</taxon>
        <taxon>Trochoidea</taxon>
        <taxon>Tegulidae</taxon>
        <taxon>Omphalius</taxon>
    </lineage>
</organism>
<keyword id="KW-0903">Direct protein sequencing</keyword>